<protein>
    <recommendedName>
        <fullName evidence="1">Trigger factor</fullName>
        <shortName evidence="1">TF</shortName>
        <ecNumber evidence="1">5.2.1.8</ecNumber>
    </recommendedName>
    <alternativeName>
        <fullName evidence="1">PPIase</fullName>
    </alternativeName>
</protein>
<gene>
    <name evidence="1" type="primary">tig</name>
    <name type="ordered locus">Mpop_2370</name>
</gene>
<proteinExistence type="inferred from homology"/>
<evidence type="ECO:0000255" key="1">
    <source>
        <dbReference type="HAMAP-Rule" id="MF_00303"/>
    </source>
</evidence>
<evidence type="ECO:0000256" key="2">
    <source>
        <dbReference type="SAM" id="MobiDB-lite"/>
    </source>
</evidence>
<reference key="1">
    <citation type="submission" date="2008-04" db="EMBL/GenBank/DDBJ databases">
        <title>Complete sequence of chromosome of Methylobacterium populi BJ001.</title>
        <authorList>
            <consortium name="US DOE Joint Genome Institute"/>
            <person name="Copeland A."/>
            <person name="Lucas S."/>
            <person name="Lapidus A."/>
            <person name="Glavina del Rio T."/>
            <person name="Dalin E."/>
            <person name="Tice H."/>
            <person name="Bruce D."/>
            <person name="Goodwin L."/>
            <person name="Pitluck S."/>
            <person name="Chertkov O."/>
            <person name="Brettin T."/>
            <person name="Detter J.C."/>
            <person name="Han C."/>
            <person name="Kuske C.R."/>
            <person name="Schmutz J."/>
            <person name="Larimer F."/>
            <person name="Land M."/>
            <person name="Hauser L."/>
            <person name="Kyrpides N."/>
            <person name="Mikhailova N."/>
            <person name="Marx C."/>
            <person name="Richardson P."/>
        </authorList>
    </citation>
    <scope>NUCLEOTIDE SEQUENCE [LARGE SCALE GENOMIC DNA]</scope>
    <source>
        <strain>ATCC BAA-705 / NCIMB 13946 / BJ001</strain>
    </source>
</reference>
<organism>
    <name type="scientific">Methylorubrum populi (strain ATCC BAA-705 / NCIMB 13946 / BJ001)</name>
    <name type="common">Methylobacterium populi</name>
    <dbReference type="NCBI Taxonomy" id="441620"/>
    <lineage>
        <taxon>Bacteria</taxon>
        <taxon>Pseudomonadati</taxon>
        <taxon>Pseudomonadota</taxon>
        <taxon>Alphaproteobacteria</taxon>
        <taxon>Hyphomicrobiales</taxon>
        <taxon>Methylobacteriaceae</taxon>
        <taxon>Methylorubrum</taxon>
    </lineage>
</organism>
<keyword id="KW-0131">Cell cycle</keyword>
<keyword id="KW-0132">Cell division</keyword>
<keyword id="KW-0143">Chaperone</keyword>
<keyword id="KW-0963">Cytoplasm</keyword>
<keyword id="KW-0413">Isomerase</keyword>
<keyword id="KW-0697">Rotamase</keyword>
<feature type="chain" id="PRO_1000115553" description="Trigger factor">
    <location>
        <begin position="1"/>
        <end position="478"/>
    </location>
</feature>
<feature type="domain" description="PPIase FKBP-type" evidence="1">
    <location>
        <begin position="173"/>
        <end position="258"/>
    </location>
</feature>
<feature type="region of interest" description="Disordered" evidence="2">
    <location>
        <begin position="154"/>
        <end position="173"/>
    </location>
</feature>
<feature type="region of interest" description="Disordered" evidence="2">
    <location>
        <begin position="444"/>
        <end position="478"/>
    </location>
</feature>
<feature type="compositionally biased region" description="Basic and acidic residues" evidence="2">
    <location>
        <begin position="154"/>
        <end position="167"/>
    </location>
</feature>
<sequence>MQVTETTSEGLKREFQVLLPANELEDRLNTELSNIKGKVQIKGFRPGKVPVAHLRKVYGKSVMADVLQNAVNEANQQIVSDKGLRLALEPQIEFPKDEEQTIIERALDAKGDLAFKVKLEVLPSFELADLSDVSIKKLVLKPSDEEVNETLERMAKDSRSFEPREEGAEAQSGDRVTIDFVGRIDGTEFEGGKGEDVDLELGSNTFIPGFEDQLVGAKVGDARLVKVAFPADYQAEQLAGKDAEFDVTVKAVAAPGETKIDDELAKRFGMDDLEKLKEAVSKAVGADYEAQSRRKLKKELLDALDGKYAFDLPPSLVHQEFAAVWAQVEQDLKNRGKTFEDEGTTEEASQAEYRKIAERRVRLGLVLAQVGETADIKVSDDEVNQALFARIRQFPGQEKQVYDFYRNNPQALAELRAPLFEEKVVDHVLGQVQVVEEPVSKEALFAEDDEADAVTGAAATDEKPSESSNEAAADKAAG</sequence>
<comment type="function">
    <text evidence="1">Involved in protein export. Acts as a chaperone by maintaining the newly synthesized protein in an open conformation. Functions as a peptidyl-prolyl cis-trans isomerase.</text>
</comment>
<comment type="catalytic activity">
    <reaction evidence="1">
        <text>[protein]-peptidylproline (omega=180) = [protein]-peptidylproline (omega=0)</text>
        <dbReference type="Rhea" id="RHEA:16237"/>
        <dbReference type="Rhea" id="RHEA-COMP:10747"/>
        <dbReference type="Rhea" id="RHEA-COMP:10748"/>
        <dbReference type="ChEBI" id="CHEBI:83833"/>
        <dbReference type="ChEBI" id="CHEBI:83834"/>
        <dbReference type="EC" id="5.2.1.8"/>
    </reaction>
</comment>
<comment type="subcellular location">
    <subcellularLocation>
        <location>Cytoplasm</location>
    </subcellularLocation>
    <text evidence="1">About half TF is bound to the ribosome near the polypeptide exit tunnel while the other half is free in the cytoplasm.</text>
</comment>
<comment type="domain">
    <text evidence="1">Consists of 3 domains; the N-terminus binds the ribosome, the middle domain has PPIase activity, while the C-terminus has intrinsic chaperone activity on its own.</text>
</comment>
<comment type="similarity">
    <text evidence="1">Belongs to the FKBP-type PPIase family. Tig subfamily.</text>
</comment>
<dbReference type="EC" id="5.2.1.8" evidence="1"/>
<dbReference type="EMBL" id="CP001029">
    <property type="protein sequence ID" value="ACB80532.1"/>
    <property type="molecule type" value="Genomic_DNA"/>
</dbReference>
<dbReference type="RefSeq" id="WP_012454264.1">
    <property type="nucleotide sequence ID" value="NC_010725.1"/>
</dbReference>
<dbReference type="SMR" id="B1Z9C6"/>
<dbReference type="STRING" id="441620.Mpop_2370"/>
<dbReference type="KEGG" id="mpo:Mpop_2370"/>
<dbReference type="eggNOG" id="COG0544">
    <property type="taxonomic scope" value="Bacteria"/>
</dbReference>
<dbReference type="HOGENOM" id="CLU_033058_2_2_5"/>
<dbReference type="OrthoDB" id="9767721at2"/>
<dbReference type="Proteomes" id="UP000007136">
    <property type="component" value="Chromosome"/>
</dbReference>
<dbReference type="GO" id="GO:0005737">
    <property type="term" value="C:cytoplasm"/>
    <property type="evidence" value="ECO:0007669"/>
    <property type="project" value="UniProtKB-SubCell"/>
</dbReference>
<dbReference type="GO" id="GO:0003755">
    <property type="term" value="F:peptidyl-prolyl cis-trans isomerase activity"/>
    <property type="evidence" value="ECO:0007669"/>
    <property type="project" value="UniProtKB-UniRule"/>
</dbReference>
<dbReference type="GO" id="GO:0044183">
    <property type="term" value="F:protein folding chaperone"/>
    <property type="evidence" value="ECO:0007669"/>
    <property type="project" value="TreeGrafter"/>
</dbReference>
<dbReference type="GO" id="GO:0043022">
    <property type="term" value="F:ribosome binding"/>
    <property type="evidence" value="ECO:0007669"/>
    <property type="project" value="TreeGrafter"/>
</dbReference>
<dbReference type="GO" id="GO:0051083">
    <property type="term" value="P:'de novo' cotranslational protein folding"/>
    <property type="evidence" value="ECO:0007669"/>
    <property type="project" value="TreeGrafter"/>
</dbReference>
<dbReference type="GO" id="GO:0051301">
    <property type="term" value="P:cell division"/>
    <property type="evidence" value="ECO:0007669"/>
    <property type="project" value="UniProtKB-KW"/>
</dbReference>
<dbReference type="GO" id="GO:0061077">
    <property type="term" value="P:chaperone-mediated protein folding"/>
    <property type="evidence" value="ECO:0007669"/>
    <property type="project" value="TreeGrafter"/>
</dbReference>
<dbReference type="GO" id="GO:0015031">
    <property type="term" value="P:protein transport"/>
    <property type="evidence" value="ECO:0007669"/>
    <property type="project" value="UniProtKB-UniRule"/>
</dbReference>
<dbReference type="GO" id="GO:0043335">
    <property type="term" value="P:protein unfolding"/>
    <property type="evidence" value="ECO:0007669"/>
    <property type="project" value="TreeGrafter"/>
</dbReference>
<dbReference type="FunFam" id="3.10.50.40:FF:000001">
    <property type="entry name" value="Trigger factor"/>
    <property type="match status" value="1"/>
</dbReference>
<dbReference type="Gene3D" id="3.10.50.40">
    <property type="match status" value="1"/>
</dbReference>
<dbReference type="Gene3D" id="3.30.70.1050">
    <property type="entry name" value="Trigger factor ribosome-binding domain"/>
    <property type="match status" value="1"/>
</dbReference>
<dbReference type="Gene3D" id="1.10.3120.10">
    <property type="entry name" value="Trigger factor, C-terminal domain"/>
    <property type="match status" value="1"/>
</dbReference>
<dbReference type="HAMAP" id="MF_00303">
    <property type="entry name" value="Trigger_factor_Tig"/>
    <property type="match status" value="1"/>
</dbReference>
<dbReference type="InterPro" id="IPR046357">
    <property type="entry name" value="PPIase_dom_sf"/>
</dbReference>
<dbReference type="InterPro" id="IPR001179">
    <property type="entry name" value="PPIase_FKBP_dom"/>
</dbReference>
<dbReference type="InterPro" id="IPR005215">
    <property type="entry name" value="Trig_fac"/>
</dbReference>
<dbReference type="InterPro" id="IPR008880">
    <property type="entry name" value="Trigger_fac_C"/>
</dbReference>
<dbReference type="InterPro" id="IPR037041">
    <property type="entry name" value="Trigger_fac_C_sf"/>
</dbReference>
<dbReference type="InterPro" id="IPR008881">
    <property type="entry name" value="Trigger_fac_ribosome-bd_bac"/>
</dbReference>
<dbReference type="InterPro" id="IPR036611">
    <property type="entry name" value="Trigger_fac_ribosome-bd_sf"/>
</dbReference>
<dbReference type="InterPro" id="IPR027304">
    <property type="entry name" value="Trigger_fact/SurA_dom_sf"/>
</dbReference>
<dbReference type="NCBIfam" id="TIGR00115">
    <property type="entry name" value="tig"/>
    <property type="match status" value="1"/>
</dbReference>
<dbReference type="PANTHER" id="PTHR30560">
    <property type="entry name" value="TRIGGER FACTOR CHAPERONE AND PEPTIDYL-PROLYL CIS/TRANS ISOMERASE"/>
    <property type="match status" value="1"/>
</dbReference>
<dbReference type="PANTHER" id="PTHR30560:SF3">
    <property type="entry name" value="TRIGGER FACTOR-LIKE PROTEIN TIG, CHLOROPLASTIC"/>
    <property type="match status" value="1"/>
</dbReference>
<dbReference type="Pfam" id="PF00254">
    <property type="entry name" value="FKBP_C"/>
    <property type="match status" value="1"/>
</dbReference>
<dbReference type="Pfam" id="PF05698">
    <property type="entry name" value="Trigger_C"/>
    <property type="match status" value="1"/>
</dbReference>
<dbReference type="Pfam" id="PF05697">
    <property type="entry name" value="Trigger_N"/>
    <property type="match status" value="1"/>
</dbReference>
<dbReference type="PIRSF" id="PIRSF003095">
    <property type="entry name" value="Trigger_factor"/>
    <property type="match status" value="1"/>
</dbReference>
<dbReference type="SUPFAM" id="SSF54534">
    <property type="entry name" value="FKBP-like"/>
    <property type="match status" value="1"/>
</dbReference>
<dbReference type="SUPFAM" id="SSF109998">
    <property type="entry name" value="Triger factor/SurA peptide-binding domain-like"/>
    <property type="match status" value="1"/>
</dbReference>
<dbReference type="SUPFAM" id="SSF102735">
    <property type="entry name" value="Trigger factor ribosome-binding domain"/>
    <property type="match status" value="1"/>
</dbReference>
<dbReference type="PROSITE" id="PS50059">
    <property type="entry name" value="FKBP_PPIASE"/>
    <property type="match status" value="1"/>
</dbReference>
<accession>B1Z9C6</accession>
<name>TIG_METPB</name>